<gene>
    <name evidence="1" type="primary">mukB</name>
    <name type="ordered locus">YPTB1430</name>
</gene>
<keyword id="KW-0067">ATP-binding</keyword>
<keyword id="KW-0131">Cell cycle</keyword>
<keyword id="KW-0132">Cell division</keyword>
<keyword id="KW-0159">Chromosome partition</keyword>
<keyword id="KW-0175">Coiled coil</keyword>
<keyword id="KW-0963">Cytoplasm</keyword>
<keyword id="KW-0226">DNA condensation</keyword>
<keyword id="KW-0238">DNA-binding</keyword>
<keyword id="KW-0547">Nucleotide-binding</keyword>
<name>MUKB_YERPS</name>
<comment type="function">
    <text evidence="1">Plays a central role in chromosome condensation, segregation and cell cycle progression. Functions as a homodimer, which is essential for chromosome partition. Involved in negative DNA supercoiling in vivo, and by this means organize and compact chromosomes. May achieve or facilitate chromosome segregation by condensation DNA from both sides of a centrally located replisome during cell division.</text>
</comment>
<comment type="subunit">
    <text evidence="1">Homodimerization via its hinge domain. Binds to DNA via its C-terminal region. Interacts, and probably forms a ternary complex, with MukE and MukF via its C-terminal region. The complex formation is stimulated by calcium or magnesium. Interacts with tubulin-related protein FtsZ.</text>
</comment>
<comment type="subcellular location">
    <subcellularLocation>
        <location evidence="1">Cytoplasm</location>
        <location evidence="1">Nucleoid</location>
    </subcellularLocation>
    <text evidence="1">Restricted to the nucleoid region.</text>
</comment>
<comment type="domain">
    <text evidence="1">The hinge domain, which separates the large intramolecular coiled coil regions, allows the homodimerization, forming a V-shaped homodimer.</text>
</comment>
<comment type="similarity">
    <text evidence="1">Belongs to the SMC family. MukB subfamily.</text>
</comment>
<feature type="chain" id="PRO_0000068234" description="Chromosome partition protein MukB">
    <location>
        <begin position="1"/>
        <end position="1485"/>
    </location>
</feature>
<feature type="region of interest" description="Flexible hinge" evidence="1">
    <location>
        <begin position="666"/>
        <end position="783"/>
    </location>
</feature>
<feature type="coiled-coil region" evidence="1">
    <location>
        <begin position="337"/>
        <end position="480"/>
    </location>
</feature>
<feature type="coiled-coil region" evidence="1">
    <location>
        <begin position="509"/>
        <end position="605"/>
    </location>
</feature>
<feature type="coiled-coil region" evidence="1">
    <location>
        <begin position="780"/>
        <end position="805"/>
    </location>
</feature>
<feature type="coiled-coil region" evidence="1">
    <location>
        <begin position="835"/>
        <end position="915"/>
    </location>
</feature>
<feature type="coiled-coil region" evidence="1">
    <location>
        <begin position="977"/>
        <end position="1116"/>
    </location>
</feature>
<feature type="coiled-coil region" evidence="1">
    <location>
        <begin position="1210"/>
        <end position="1235"/>
    </location>
</feature>
<feature type="binding site" evidence="1">
    <location>
        <begin position="34"/>
        <end position="41"/>
    </location>
    <ligand>
        <name>ATP</name>
        <dbReference type="ChEBI" id="CHEBI:30616"/>
    </ligand>
</feature>
<organism>
    <name type="scientific">Yersinia pseudotuberculosis serotype I (strain IP32953)</name>
    <dbReference type="NCBI Taxonomy" id="273123"/>
    <lineage>
        <taxon>Bacteria</taxon>
        <taxon>Pseudomonadati</taxon>
        <taxon>Pseudomonadota</taxon>
        <taxon>Gammaproteobacteria</taxon>
        <taxon>Enterobacterales</taxon>
        <taxon>Yersiniaceae</taxon>
        <taxon>Yersinia</taxon>
    </lineage>
</organism>
<evidence type="ECO:0000255" key="1">
    <source>
        <dbReference type="HAMAP-Rule" id="MF_01800"/>
    </source>
</evidence>
<reference key="1">
    <citation type="journal article" date="2004" name="Proc. Natl. Acad. Sci. U.S.A.">
        <title>Insights into the evolution of Yersinia pestis through whole-genome comparison with Yersinia pseudotuberculosis.</title>
        <authorList>
            <person name="Chain P.S.G."/>
            <person name="Carniel E."/>
            <person name="Larimer F.W."/>
            <person name="Lamerdin J."/>
            <person name="Stoutland P.O."/>
            <person name="Regala W.M."/>
            <person name="Georgescu A.M."/>
            <person name="Vergez L.M."/>
            <person name="Land M.L."/>
            <person name="Motin V.L."/>
            <person name="Brubaker R.R."/>
            <person name="Fowler J."/>
            <person name="Hinnebusch J."/>
            <person name="Marceau M."/>
            <person name="Medigue C."/>
            <person name="Simonet M."/>
            <person name="Chenal-Francisque V."/>
            <person name="Souza B."/>
            <person name="Dacheux D."/>
            <person name="Elliott J.M."/>
            <person name="Derbise A."/>
            <person name="Hauser L.J."/>
            <person name="Garcia E."/>
        </authorList>
    </citation>
    <scope>NUCLEOTIDE SEQUENCE [LARGE SCALE GENOMIC DNA]</scope>
    <source>
        <strain>IP32953</strain>
    </source>
</reference>
<protein>
    <recommendedName>
        <fullName evidence="1">Chromosome partition protein MukB</fullName>
    </recommendedName>
    <alternativeName>
        <fullName evidence="1">Structural maintenance of chromosome-related protein</fullName>
    </alternativeName>
</protein>
<accession>Q66CH3</accession>
<dbReference type="EMBL" id="BX936398">
    <property type="protein sequence ID" value="CAH20670.1"/>
    <property type="molecule type" value="Genomic_DNA"/>
</dbReference>
<dbReference type="RefSeq" id="WP_002211308.1">
    <property type="nucleotide sequence ID" value="NZ_CP009712.1"/>
</dbReference>
<dbReference type="SMR" id="Q66CH3"/>
<dbReference type="GeneID" id="57977201"/>
<dbReference type="KEGG" id="ypo:BZ17_1087"/>
<dbReference type="KEGG" id="yps:YPTB1430"/>
<dbReference type="PATRIC" id="fig|273123.14.peg.1153"/>
<dbReference type="Proteomes" id="UP000001011">
    <property type="component" value="Chromosome"/>
</dbReference>
<dbReference type="GO" id="GO:0005737">
    <property type="term" value="C:cytoplasm"/>
    <property type="evidence" value="ECO:0007669"/>
    <property type="project" value="UniProtKB-UniRule"/>
</dbReference>
<dbReference type="GO" id="GO:0009295">
    <property type="term" value="C:nucleoid"/>
    <property type="evidence" value="ECO:0007669"/>
    <property type="project" value="UniProtKB-SubCell"/>
</dbReference>
<dbReference type="GO" id="GO:0005524">
    <property type="term" value="F:ATP binding"/>
    <property type="evidence" value="ECO:0007669"/>
    <property type="project" value="UniProtKB-UniRule"/>
</dbReference>
<dbReference type="GO" id="GO:0003677">
    <property type="term" value="F:DNA binding"/>
    <property type="evidence" value="ECO:0007669"/>
    <property type="project" value="UniProtKB-UniRule"/>
</dbReference>
<dbReference type="GO" id="GO:0051301">
    <property type="term" value="P:cell division"/>
    <property type="evidence" value="ECO:0007669"/>
    <property type="project" value="UniProtKB-KW"/>
</dbReference>
<dbReference type="GO" id="GO:0030261">
    <property type="term" value="P:chromosome condensation"/>
    <property type="evidence" value="ECO:0007669"/>
    <property type="project" value="UniProtKB-KW"/>
</dbReference>
<dbReference type="GO" id="GO:0007059">
    <property type="term" value="P:chromosome segregation"/>
    <property type="evidence" value="ECO:0007669"/>
    <property type="project" value="UniProtKB-UniRule"/>
</dbReference>
<dbReference type="GO" id="GO:0006260">
    <property type="term" value="P:DNA replication"/>
    <property type="evidence" value="ECO:0007669"/>
    <property type="project" value="UniProtKB-UniRule"/>
</dbReference>
<dbReference type="FunFam" id="3.30.70.3500:FF:000001">
    <property type="entry name" value="Chromosome partition protein MukB"/>
    <property type="match status" value="1"/>
</dbReference>
<dbReference type="FunFam" id="3.40.1140.10:FF:000001">
    <property type="entry name" value="Chromosome partition protein MukB"/>
    <property type="match status" value="1"/>
</dbReference>
<dbReference type="FunFam" id="3.40.1140.10:FF:000002">
    <property type="entry name" value="Chromosome partition protein MukB"/>
    <property type="match status" value="1"/>
</dbReference>
<dbReference type="Gene3D" id="1.10.287.1490">
    <property type="match status" value="1"/>
</dbReference>
<dbReference type="Gene3D" id="1.20.58.850">
    <property type="match status" value="1"/>
</dbReference>
<dbReference type="Gene3D" id="3.40.1140.10">
    <property type="match status" value="2"/>
</dbReference>
<dbReference type="Gene3D" id="1.20.5.420">
    <property type="entry name" value="Immunoglobulin FC, subunit C"/>
    <property type="match status" value="1"/>
</dbReference>
<dbReference type="Gene3D" id="3.30.70.3500">
    <property type="entry name" value="MukB, hinge domain"/>
    <property type="match status" value="1"/>
</dbReference>
<dbReference type="HAMAP" id="MF_01800">
    <property type="entry name" value="MukB"/>
    <property type="match status" value="1"/>
</dbReference>
<dbReference type="InterPro" id="IPR012090">
    <property type="entry name" value="MukB"/>
</dbReference>
<dbReference type="InterPro" id="IPR050308">
    <property type="entry name" value="MukB/SMC"/>
</dbReference>
<dbReference type="InterPro" id="IPR032520">
    <property type="entry name" value="MukB_hinge"/>
</dbReference>
<dbReference type="InterPro" id="IPR042501">
    <property type="entry name" value="MukB_hinge_sf"/>
</dbReference>
<dbReference type="InterPro" id="IPR007406">
    <property type="entry name" value="MukB_N_dom"/>
</dbReference>
<dbReference type="InterPro" id="IPR027417">
    <property type="entry name" value="P-loop_NTPase"/>
</dbReference>
<dbReference type="NCBIfam" id="NF003422">
    <property type="entry name" value="PRK04863.1"/>
    <property type="match status" value="1"/>
</dbReference>
<dbReference type="PANTHER" id="PTHR42963">
    <property type="entry name" value="CHROMOSOME PARTITION PROTEIN MUKB"/>
    <property type="match status" value="1"/>
</dbReference>
<dbReference type="PANTHER" id="PTHR42963:SF1">
    <property type="entry name" value="DUF4476 DOMAIN-CONTAINING PROTEIN"/>
    <property type="match status" value="1"/>
</dbReference>
<dbReference type="Pfam" id="PF04310">
    <property type="entry name" value="MukB"/>
    <property type="match status" value="1"/>
</dbReference>
<dbReference type="Pfam" id="PF16330">
    <property type="entry name" value="MukB_hinge"/>
    <property type="match status" value="1"/>
</dbReference>
<dbReference type="Pfam" id="PF13558">
    <property type="entry name" value="SbcC_Walker_B"/>
    <property type="match status" value="1"/>
</dbReference>
<dbReference type="PIRSF" id="PIRSF005246">
    <property type="entry name" value="MukB"/>
    <property type="match status" value="1"/>
</dbReference>
<dbReference type="SUPFAM" id="SSF52540">
    <property type="entry name" value="P-loop containing nucleoside triphosphate hydrolases"/>
    <property type="match status" value="2"/>
</dbReference>
<sequence length="1485" mass="169909">MIERGKFRSLTLVNWNGFFARTFDLDELVTTLSGGNGAGKSTTMAAFVTALIPDLTLLHFRNTTEAGATSGSRDKGLHGKLRAGVCYSTLDVVNSRHQRVVVGVRLQQVAGRDRKVDIKPFTIQGLPTAIQPTEILTELVAERQARVLSLPELKERVEAMEGVQFKQFNSITDYHSLMFDLGVIPKRLRSSADRSKFYRLIEASLYGGISSAITRSLRDYLLPENSGVRKAFQDMEAALRENRMTLEAIRVTQSDRDLFKHLISEATSYVAADYMRHANERRIHLDSALVLRRDLFSSRKQLVTEQYRHVEMSRELAEQSGAESDLETDYQAASDHLNLVQTAMRQQEKIERYQSDLEELTYRLEEQSEVVSEASEQQADNEARAEAAELEVDELKSQLADYQQALDVQQTRAIQYQQALQALERARALCQLPELTADNAEEWLETFHAKEQEATESLLQLEQKLSVADAAHSQFEQAYQLVVNIAGEVSRSEAWQTARELLRDWPSQQHLAERVQPLRMRLSELEQRLRAQQDAERLLQEFCKRQGNAYQPEELEALQRELESQVEELSLSVSDAGERRMAMRQELEQLKLKIQELTARAPVWLAAQDALSQLSEQSGEALEDSRQVTEYMQQLLERERETTVERDEIAASKRAIEAQIERLSQPSGAEDARLIALAERFGGVLLSEIYDDVTIDDAPYFSALYGPSRHGIVVPDLSLVREHLQGLDDCPEDLYLIEGDPQSFDDSVFAVEEHEKAVVVKIADRQWRYSRYPEVPLFGRAARENRLETLYQERDRLAERYATLSFDVQKTQRTHQAFSRFIGSHLAVAFDADPEAEIRLLNTRRGEIERALNAHEDQNQQQRQQFDQAKEGISALNRLIPLVSLLLDETLTDRVEEITEELAEAQEAARYIQQHGVSLTKLEPLLSVLQSDPQQHEQLQESYVLAQNSQRLAKQQAFALTEVVQRRAHFSYTDSAGMLTENSDLNDKLRQRLEQAEAERTRAREQLRQYQSQFTQYSQVLASLKSSYDAKRDMLKELSQELVDIGVPADANAEARARARRDELHAALSTNRSRRNQLEKQLTFCEAEMDSLQKKLRKLERDYHQIREQVVNAKAGWCAVMRMVKDNGVERRLHRRELAYMDGDELRSMSDKALGALRLAVADNEHLRDVLRLSEDPKRPERKIQFYIAVYQHLRERIRQDIIRTDDPVEAIEQMEIELGRLTEELTAREQKLAISSKSVSNIIRKTIHREQNRIRMLNQGLQAVSFGQVKSVRLNVNVREAHATLLDVLSEQQEQHQDLFNSNRLTFSEALAKLYQRLNPQMDMGQRLPQTIGEELLDYRNYLELEVEVYRGADGWLRAESGALSTGEAIGTGMSILVMVVQSWEEESRRLRGKDISPCRLLFLDEAARLDAKSIATLFELCERLEMQLIIAAPENISPEKGTTYKLVRKVFQNHEHVHVVGLRGFANEMPSLPPIAAELQQGG</sequence>
<proteinExistence type="inferred from homology"/>